<proteinExistence type="inferred from homology"/>
<name>RR2_OENBI</name>
<feature type="chain" id="PRO_0000352139" description="Small ribosomal subunit protein uS2c">
    <location>
        <begin position="1"/>
        <end position="236"/>
    </location>
</feature>
<keyword id="KW-0150">Chloroplast</keyword>
<keyword id="KW-0934">Plastid</keyword>
<keyword id="KW-0687">Ribonucleoprotein</keyword>
<keyword id="KW-0689">Ribosomal protein</keyword>
<protein>
    <recommendedName>
        <fullName evidence="1">Small ribosomal subunit protein uS2c</fullName>
    </recommendedName>
    <alternativeName>
        <fullName>30S ribosomal protein S2, chloroplastic</fullName>
    </alternativeName>
</protein>
<comment type="subcellular location">
    <subcellularLocation>
        <location>Plastid</location>
        <location>Chloroplast</location>
    </subcellularLocation>
</comment>
<comment type="similarity">
    <text evidence="1">Belongs to the universal ribosomal protein uS2 family.</text>
</comment>
<sequence>MTRRYWNINLEEMMEAGVHFGHGIKKWNPRMAPYIYANRKGIHITNLTKTARFLAEACDLVFDAASRGGQFLIVGTKKQAAALVARAAIKARCHYVNKKWLGGMLTNWSTTETRLHQFRDLRTEQKTGRLNRLPKRDAAILKRQLSHLQTYLGGIKYMTGLPDILIILDQQEEYTALRECITLGIPTICLIDTDCDPDLADLPIPANDDAMASIRLILNKLVFAICEGRSSSIRNP</sequence>
<evidence type="ECO:0000305" key="1"/>
<accession>B0Z4W2</accession>
<reference key="1">
    <citation type="journal article" date="2008" name="Nucleic Acids Res.">
        <title>The complete nucleotide sequences of the five genetically distinct plastid genomes of Oenothera, subsection Oenothera: I. Sequence evaluation and plastome evolution.</title>
        <authorList>
            <person name="Greiner S."/>
            <person name="Wang X."/>
            <person name="Rauwolf U."/>
            <person name="Silber M.V."/>
            <person name="Mayer K."/>
            <person name="Meurer J."/>
            <person name="Haberer G."/>
            <person name="Herrmann R.G."/>
        </authorList>
    </citation>
    <scope>NUCLEOTIDE SEQUENCE [LARGE SCALE GENOMIC DNA]</scope>
    <source>
        <strain>cv. Suaveolens Grado</strain>
    </source>
</reference>
<organism>
    <name type="scientific">Oenothera biennis</name>
    <name type="common">German evening primrose</name>
    <name type="synonym">Onagra biennis</name>
    <dbReference type="NCBI Taxonomy" id="3942"/>
    <lineage>
        <taxon>Eukaryota</taxon>
        <taxon>Viridiplantae</taxon>
        <taxon>Streptophyta</taxon>
        <taxon>Embryophyta</taxon>
        <taxon>Tracheophyta</taxon>
        <taxon>Spermatophyta</taxon>
        <taxon>Magnoliopsida</taxon>
        <taxon>eudicotyledons</taxon>
        <taxon>Gunneridae</taxon>
        <taxon>Pentapetalae</taxon>
        <taxon>rosids</taxon>
        <taxon>malvids</taxon>
        <taxon>Myrtales</taxon>
        <taxon>Onagraceae</taxon>
        <taxon>Onagroideae</taxon>
        <taxon>Onagreae</taxon>
        <taxon>Oenothera</taxon>
    </lineage>
</organism>
<gene>
    <name type="primary">rps2</name>
</gene>
<dbReference type="EMBL" id="EU262889">
    <property type="protein sequence ID" value="ABW98874.1"/>
    <property type="molecule type" value="Genomic_DNA"/>
</dbReference>
<dbReference type="RefSeq" id="YP_001687369.1">
    <property type="nucleotide sequence ID" value="NC_010361.1"/>
</dbReference>
<dbReference type="SMR" id="B0Z4W2"/>
<dbReference type="GeneID" id="5952074"/>
<dbReference type="GO" id="GO:0009507">
    <property type="term" value="C:chloroplast"/>
    <property type="evidence" value="ECO:0007669"/>
    <property type="project" value="UniProtKB-SubCell"/>
</dbReference>
<dbReference type="GO" id="GO:0005763">
    <property type="term" value="C:mitochondrial small ribosomal subunit"/>
    <property type="evidence" value="ECO:0007669"/>
    <property type="project" value="TreeGrafter"/>
</dbReference>
<dbReference type="GO" id="GO:0003735">
    <property type="term" value="F:structural constituent of ribosome"/>
    <property type="evidence" value="ECO:0007669"/>
    <property type="project" value="InterPro"/>
</dbReference>
<dbReference type="GO" id="GO:0006412">
    <property type="term" value="P:translation"/>
    <property type="evidence" value="ECO:0007669"/>
    <property type="project" value="UniProtKB-UniRule"/>
</dbReference>
<dbReference type="CDD" id="cd01425">
    <property type="entry name" value="RPS2"/>
    <property type="match status" value="1"/>
</dbReference>
<dbReference type="FunFam" id="1.10.287.610:FF:000001">
    <property type="entry name" value="30S ribosomal protein S2"/>
    <property type="match status" value="1"/>
</dbReference>
<dbReference type="Gene3D" id="3.40.50.10490">
    <property type="entry name" value="Glucose-6-phosphate isomerase like protein, domain 1"/>
    <property type="match status" value="1"/>
</dbReference>
<dbReference type="Gene3D" id="1.10.287.610">
    <property type="entry name" value="Helix hairpin bin"/>
    <property type="match status" value="1"/>
</dbReference>
<dbReference type="HAMAP" id="MF_00291_B">
    <property type="entry name" value="Ribosomal_uS2_B"/>
    <property type="match status" value="1"/>
</dbReference>
<dbReference type="InterPro" id="IPR001865">
    <property type="entry name" value="Ribosomal_uS2"/>
</dbReference>
<dbReference type="InterPro" id="IPR005706">
    <property type="entry name" value="Ribosomal_uS2_bac/mit/plastid"/>
</dbReference>
<dbReference type="InterPro" id="IPR018130">
    <property type="entry name" value="Ribosomal_uS2_CS"/>
</dbReference>
<dbReference type="InterPro" id="IPR023591">
    <property type="entry name" value="Ribosomal_uS2_flav_dom_sf"/>
</dbReference>
<dbReference type="NCBIfam" id="TIGR01011">
    <property type="entry name" value="rpsB_bact"/>
    <property type="match status" value="1"/>
</dbReference>
<dbReference type="PANTHER" id="PTHR12534">
    <property type="entry name" value="30S RIBOSOMAL PROTEIN S2 PROKARYOTIC AND ORGANELLAR"/>
    <property type="match status" value="1"/>
</dbReference>
<dbReference type="PANTHER" id="PTHR12534:SF0">
    <property type="entry name" value="SMALL RIBOSOMAL SUBUNIT PROTEIN US2M"/>
    <property type="match status" value="1"/>
</dbReference>
<dbReference type="Pfam" id="PF00318">
    <property type="entry name" value="Ribosomal_S2"/>
    <property type="match status" value="1"/>
</dbReference>
<dbReference type="PRINTS" id="PR00395">
    <property type="entry name" value="RIBOSOMALS2"/>
</dbReference>
<dbReference type="SUPFAM" id="SSF52313">
    <property type="entry name" value="Ribosomal protein S2"/>
    <property type="match status" value="1"/>
</dbReference>
<dbReference type="PROSITE" id="PS00962">
    <property type="entry name" value="RIBOSOMAL_S2_1"/>
    <property type="match status" value="1"/>
</dbReference>
<dbReference type="PROSITE" id="PS00963">
    <property type="entry name" value="RIBOSOMAL_S2_2"/>
    <property type="match status" value="1"/>
</dbReference>
<geneLocation type="chloroplast"/>